<accession>Q0BPA9</accession>
<reference key="1">
    <citation type="journal article" date="2006" name="J. Bacteriol.">
        <title>Chromosome rearrangement and diversification of Francisella tularensis revealed by the type B (OSU18) genome sequence.</title>
        <authorList>
            <person name="Petrosino J.F."/>
            <person name="Xiang Q."/>
            <person name="Karpathy S.E."/>
            <person name="Jiang H."/>
            <person name="Yerrapragada S."/>
            <person name="Liu Y."/>
            <person name="Gioia J."/>
            <person name="Hemphill L."/>
            <person name="Gonzalez A."/>
            <person name="Raghavan T.M."/>
            <person name="Uzman A."/>
            <person name="Fox G.E."/>
            <person name="Highlander S."/>
            <person name="Reichard M."/>
            <person name="Morton R.J."/>
            <person name="Clinkenbeard K.D."/>
            <person name="Weinstock G.M."/>
        </authorList>
    </citation>
    <scope>NUCLEOTIDE SEQUENCE [LARGE SCALE GENOMIC DNA]</scope>
    <source>
        <strain>OSU18</strain>
    </source>
</reference>
<dbReference type="EMBL" id="CP000437">
    <property type="protein sequence ID" value="ABI82075.1"/>
    <property type="molecule type" value="Genomic_DNA"/>
</dbReference>
<dbReference type="SMR" id="Q0BPA9"/>
<dbReference type="KEGG" id="fth:FTH_0011"/>
<dbReference type="GO" id="GO:0005737">
    <property type="term" value="C:cytoplasm"/>
    <property type="evidence" value="ECO:0007669"/>
    <property type="project" value="UniProtKB-SubCell"/>
</dbReference>
<dbReference type="GO" id="GO:0051082">
    <property type="term" value="F:unfolded protein binding"/>
    <property type="evidence" value="ECO:0007669"/>
    <property type="project" value="InterPro"/>
</dbReference>
<dbReference type="GO" id="GO:0006457">
    <property type="term" value="P:protein folding"/>
    <property type="evidence" value="ECO:0007669"/>
    <property type="project" value="UniProtKB-UniRule"/>
</dbReference>
<dbReference type="GO" id="GO:0051262">
    <property type="term" value="P:protein tetramerization"/>
    <property type="evidence" value="ECO:0007669"/>
    <property type="project" value="InterPro"/>
</dbReference>
<dbReference type="GO" id="GO:0015031">
    <property type="term" value="P:protein transport"/>
    <property type="evidence" value="ECO:0007669"/>
    <property type="project" value="UniProtKB-UniRule"/>
</dbReference>
<dbReference type="Gene3D" id="3.10.420.10">
    <property type="entry name" value="SecB-like"/>
    <property type="match status" value="1"/>
</dbReference>
<dbReference type="HAMAP" id="MF_00821">
    <property type="entry name" value="SecB"/>
    <property type="match status" value="1"/>
</dbReference>
<dbReference type="InterPro" id="IPR003708">
    <property type="entry name" value="SecB"/>
</dbReference>
<dbReference type="InterPro" id="IPR035958">
    <property type="entry name" value="SecB-like_sf"/>
</dbReference>
<dbReference type="NCBIfam" id="NF004393">
    <property type="entry name" value="PRK05751.1-4"/>
    <property type="match status" value="1"/>
</dbReference>
<dbReference type="NCBIfam" id="NF009590">
    <property type="entry name" value="PRK13031.1"/>
    <property type="match status" value="1"/>
</dbReference>
<dbReference type="NCBIfam" id="TIGR00809">
    <property type="entry name" value="secB"/>
    <property type="match status" value="1"/>
</dbReference>
<dbReference type="PANTHER" id="PTHR36918">
    <property type="match status" value="1"/>
</dbReference>
<dbReference type="PANTHER" id="PTHR36918:SF1">
    <property type="entry name" value="PROTEIN-EXPORT PROTEIN SECB"/>
    <property type="match status" value="1"/>
</dbReference>
<dbReference type="Pfam" id="PF02556">
    <property type="entry name" value="SecB"/>
    <property type="match status" value="1"/>
</dbReference>
<dbReference type="PRINTS" id="PR01594">
    <property type="entry name" value="SECBCHAPRONE"/>
</dbReference>
<dbReference type="SUPFAM" id="SSF54611">
    <property type="entry name" value="SecB-like"/>
    <property type="match status" value="1"/>
</dbReference>
<name>SECB1_FRATO</name>
<sequence length="149" mass="16900">MDQQAQPQFQIQKVYVKDLSFSIPNSDKIWTTNWKPELHTDLKVEATKLPEENTYETVLTLEVKVENDGMVAFEAEVKQAGIFTVANMQEAQIEHAKKAFCPNILYHYAREAISDLVISGGFPQLCLSAVNFDAMYQDSLKESADSKQH</sequence>
<feature type="chain" id="PRO_0000318231" description="Protein-export protein SecB 1">
    <location>
        <begin position="1"/>
        <end position="149"/>
    </location>
</feature>
<organism>
    <name type="scientific">Francisella tularensis subsp. holarctica (strain OSU18)</name>
    <dbReference type="NCBI Taxonomy" id="393011"/>
    <lineage>
        <taxon>Bacteria</taxon>
        <taxon>Pseudomonadati</taxon>
        <taxon>Pseudomonadota</taxon>
        <taxon>Gammaproteobacteria</taxon>
        <taxon>Thiotrichales</taxon>
        <taxon>Francisellaceae</taxon>
        <taxon>Francisella</taxon>
    </lineage>
</organism>
<keyword id="KW-0143">Chaperone</keyword>
<keyword id="KW-0963">Cytoplasm</keyword>
<keyword id="KW-0653">Protein transport</keyword>
<keyword id="KW-0811">Translocation</keyword>
<keyword id="KW-0813">Transport</keyword>
<protein>
    <recommendedName>
        <fullName evidence="1">Protein-export protein SecB 1</fullName>
    </recommendedName>
</protein>
<comment type="function">
    <text evidence="1">One of the proteins required for the normal export of preproteins out of the cell cytoplasm. It is a molecular chaperone that binds to a subset of precursor proteins, maintaining them in a translocation-competent state. It also specifically binds to its receptor SecA.</text>
</comment>
<comment type="subunit">
    <text evidence="1">Homotetramer, a dimer of dimers. One homotetramer interacts with 1 SecA dimer.</text>
</comment>
<comment type="subcellular location">
    <subcellularLocation>
        <location evidence="1">Cytoplasm</location>
    </subcellularLocation>
</comment>
<comment type="similarity">
    <text evidence="1">Belongs to the SecB family.</text>
</comment>
<proteinExistence type="inferred from homology"/>
<evidence type="ECO:0000255" key="1">
    <source>
        <dbReference type="HAMAP-Rule" id="MF_00821"/>
    </source>
</evidence>
<gene>
    <name evidence="1" type="primary">secB1</name>
    <name type="ordered locus">FTH_0011</name>
</gene>